<gene>
    <name evidence="1" type="primary">wecG</name>
    <name evidence="1" type="synonym">rffM</name>
    <name type="ordered locus">ECED1_4480</name>
</gene>
<accession>B7N288</accession>
<comment type="function">
    <text evidence="1">Catalyzes the synthesis of Und-PP-GlcNAc-ManNAcA (Lipid II), the second lipid-linked intermediate involved in enterobacterial common antigen (ECA) synthesis.</text>
</comment>
<comment type="catalytic activity">
    <reaction evidence="1">
        <text>UDP-N-acetyl-alpha-D-mannosaminouronate + N-acetyl-alpha-D-glucosaminyl-di-trans,octa-cis-undecaprenyl diphosphate = beta-D-ManNAcA-(1-&gt;4)-alpha-D-GlcNAc-di-trans,octa-cis-undecaprenyl diphosphate + UDP + H(+)</text>
        <dbReference type="Rhea" id="RHEA:28366"/>
        <dbReference type="ChEBI" id="CHEBI:15378"/>
        <dbReference type="ChEBI" id="CHEBI:58223"/>
        <dbReference type="ChEBI" id="CHEBI:61495"/>
        <dbReference type="ChEBI" id="CHEBI:62959"/>
        <dbReference type="ChEBI" id="CHEBI:70731"/>
        <dbReference type="EC" id="2.4.1.180"/>
    </reaction>
</comment>
<comment type="pathway">
    <text evidence="1">Bacterial outer membrane biogenesis; enterobacterial common antigen biosynthesis.</text>
</comment>
<comment type="similarity">
    <text evidence="1">Belongs to the glycosyltransferase 26 family.</text>
</comment>
<name>WECG_ECO81</name>
<keyword id="KW-0328">Glycosyltransferase</keyword>
<keyword id="KW-0808">Transferase</keyword>
<proteinExistence type="inferred from homology"/>
<sequence>MNNNTTAPTYTLRGLQLIGWRDMQHALDYLFADGQLKQGTLVAINAEKMLTIEDNAEVRELINAAEFKYADGISVVRSVRKKYPQAQVSRVAGADLWEELMARAGKEGTPVFLVGGKPEVLAQTEAKLRNQWNVNIVGSQDGYFKPEQRQALFERIHASGAQIVTVAMGSPKQEIFMRDCRLVHPDALYMGVGGTYDVFTGHVKRAPKIWQTLGLEWLYRLLSQPSRIKRQLRLLRYLRWHYTGNL</sequence>
<feature type="chain" id="PRO_1000148781" description="UDP-N-acetyl-D-mannosaminuronic acid transferase">
    <location>
        <begin position="1"/>
        <end position="246"/>
    </location>
</feature>
<organism>
    <name type="scientific">Escherichia coli O81 (strain ED1a)</name>
    <dbReference type="NCBI Taxonomy" id="585397"/>
    <lineage>
        <taxon>Bacteria</taxon>
        <taxon>Pseudomonadati</taxon>
        <taxon>Pseudomonadota</taxon>
        <taxon>Gammaproteobacteria</taxon>
        <taxon>Enterobacterales</taxon>
        <taxon>Enterobacteriaceae</taxon>
        <taxon>Escherichia</taxon>
    </lineage>
</organism>
<reference key="1">
    <citation type="journal article" date="2009" name="PLoS Genet.">
        <title>Organised genome dynamics in the Escherichia coli species results in highly diverse adaptive paths.</title>
        <authorList>
            <person name="Touchon M."/>
            <person name="Hoede C."/>
            <person name="Tenaillon O."/>
            <person name="Barbe V."/>
            <person name="Baeriswyl S."/>
            <person name="Bidet P."/>
            <person name="Bingen E."/>
            <person name="Bonacorsi S."/>
            <person name="Bouchier C."/>
            <person name="Bouvet O."/>
            <person name="Calteau A."/>
            <person name="Chiapello H."/>
            <person name="Clermont O."/>
            <person name="Cruveiller S."/>
            <person name="Danchin A."/>
            <person name="Diard M."/>
            <person name="Dossat C."/>
            <person name="Karoui M.E."/>
            <person name="Frapy E."/>
            <person name="Garry L."/>
            <person name="Ghigo J.M."/>
            <person name="Gilles A.M."/>
            <person name="Johnson J."/>
            <person name="Le Bouguenec C."/>
            <person name="Lescat M."/>
            <person name="Mangenot S."/>
            <person name="Martinez-Jehanne V."/>
            <person name="Matic I."/>
            <person name="Nassif X."/>
            <person name="Oztas S."/>
            <person name="Petit M.A."/>
            <person name="Pichon C."/>
            <person name="Rouy Z."/>
            <person name="Ruf C.S."/>
            <person name="Schneider D."/>
            <person name="Tourret J."/>
            <person name="Vacherie B."/>
            <person name="Vallenet D."/>
            <person name="Medigue C."/>
            <person name="Rocha E.P.C."/>
            <person name="Denamur E."/>
        </authorList>
    </citation>
    <scope>NUCLEOTIDE SEQUENCE [LARGE SCALE GENOMIC DNA]</scope>
    <source>
        <strain>ED1a</strain>
    </source>
</reference>
<evidence type="ECO:0000255" key="1">
    <source>
        <dbReference type="HAMAP-Rule" id="MF_01001"/>
    </source>
</evidence>
<dbReference type="EC" id="2.4.1.180" evidence="1"/>
<dbReference type="EMBL" id="CU928162">
    <property type="protein sequence ID" value="CAR10459.1"/>
    <property type="molecule type" value="Genomic_DNA"/>
</dbReference>
<dbReference type="RefSeq" id="WP_001064038.1">
    <property type="nucleotide sequence ID" value="NC_011745.1"/>
</dbReference>
<dbReference type="SMR" id="B7N288"/>
<dbReference type="CAZy" id="GT26">
    <property type="family name" value="Glycosyltransferase Family 26"/>
</dbReference>
<dbReference type="GeneID" id="93778149"/>
<dbReference type="KEGG" id="ecq:ECED1_4480"/>
<dbReference type="HOGENOM" id="CLU_063203_3_2_6"/>
<dbReference type="UniPathway" id="UPA00566"/>
<dbReference type="Proteomes" id="UP000000748">
    <property type="component" value="Chromosome"/>
</dbReference>
<dbReference type="GO" id="GO:0047241">
    <property type="term" value="F:lipopolysaccharide N-acetylmannosaminouronosyltransferase activity"/>
    <property type="evidence" value="ECO:0007669"/>
    <property type="project" value="UniProtKB-UniRule"/>
</dbReference>
<dbReference type="GO" id="GO:0009246">
    <property type="term" value="P:enterobacterial common antigen biosynthetic process"/>
    <property type="evidence" value="ECO:0007669"/>
    <property type="project" value="UniProtKB-UniRule"/>
</dbReference>
<dbReference type="CDD" id="cd06533">
    <property type="entry name" value="Glyco_transf_WecG_TagA"/>
    <property type="match status" value="1"/>
</dbReference>
<dbReference type="HAMAP" id="MF_01001">
    <property type="entry name" value="WecG_RffM"/>
    <property type="match status" value="1"/>
</dbReference>
<dbReference type="InterPro" id="IPR023085">
    <property type="entry name" value="UDP-ManNAcA_Trfase_WecG"/>
</dbReference>
<dbReference type="InterPro" id="IPR004629">
    <property type="entry name" value="WecG_TagA_CpsF"/>
</dbReference>
<dbReference type="NCBIfam" id="NF002980">
    <property type="entry name" value="PRK03692.1"/>
    <property type="match status" value="1"/>
</dbReference>
<dbReference type="NCBIfam" id="TIGR00696">
    <property type="entry name" value="wecG_tagA_cpsF"/>
    <property type="match status" value="1"/>
</dbReference>
<dbReference type="PANTHER" id="PTHR34136">
    <property type="match status" value="1"/>
</dbReference>
<dbReference type="PANTHER" id="PTHR34136:SF1">
    <property type="entry name" value="UDP-N-ACETYL-D-MANNOSAMINURONIC ACID TRANSFERASE"/>
    <property type="match status" value="1"/>
</dbReference>
<dbReference type="Pfam" id="PF03808">
    <property type="entry name" value="Glyco_tran_WecG"/>
    <property type="match status" value="1"/>
</dbReference>
<protein>
    <recommendedName>
        <fullName evidence="1">UDP-N-acetyl-D-mannosaminuronic acid transferase</fullName>
        <shortName evidence="1">UDP-ManNAcA transferase</shortName>
        <ecNumber evidence="1">2.4.1.180</ecNumber>
    </recommendedName>
</protein>